<keyword id="KW-0903">Direct protein sequencing</keyword>
<keyword id="KW-0325">Glycoprotein</keyword>
<keyword id="KW-0472">Membrane</keyword>
<keyword id="KW-1185">Reference proteome</keyword>
<keyword id="KW-0964">Secreted</keyword>
<keyword id="KW-0732">Signal</keyword>
<keyword id="KW-0812">Transmembrane</keyword>
<keyword id="KW-1133">Transmembrane helix</keyword>
<reference key="1">
    <citation type="journal article" date="2005" name="Eukaryot. Cell">
        <title>A cysteine-rich extracellular protein containing a PA14 domain mediates quorum sensing in Dictyostelium discoideum.</title>
        <authorList>
            <person name="Kolbinger A."/>
            <person name="Gao T."/>
            <person name="Brock D."/>
            <person name="Ammann R."/>
            <person name="Kisters A."/>
            <person name="Kellermann J."/>
            <person name="Hatton D."/>
            <person name="Gomer R.H."/>
            <person name="Wetterauer B."/>
        </authorList>
    </citation>
    <scope>NUCLEOTIDE SEQUENCE [GENOMIC DNA]</scope>
    <scope>PROTEIN SEQUENCE OF N-TERMINUS</scope>
    <scope>PROTEIN SEQUENCE OF 232-239 AND 485-493</scope>
    <scope>SUBCELLULAR LOCATION</scope>
    <scope>INTERACTION WITH PSIF</scope>
</reference>
<reference key="2">
    <citation type="journal article" date="2005" name="Nature">
        <title>The genome of the social amoeba Dictyostelium discoideum.</title>
        <authorList>
            <person name="Eichinger L."/>
            <person name="Pachebat J.A."/>
            <person name="Gloeckner G."/>
            <person name="Rajandream M.A."/>
            <person name="Sucgang R."/>
            <person name="Berriman M."/>
            <person name="Song J."/>
            <person name="Olsen R."/>
            <person name="Szafranski K."/>
            <person name="Xu Q."/>
            <person name="Tunggal B."/>
            <person name="Kummerfeld S."/>
            <person name="Madera M."/>
            <person name="Konfortov B.A."/>
            <person name="Rivero F."/>
            <person name="Bankier A.T."/>
            <person name="Lehmann R."/>
            <person name="Hamlin N."/>
            <person name="Davies R."/>
            <person name="Gaudet P."/>
            <person name="Fey P."/>
            <person name="Pilcher K."/>
            <person name="Chen G."/>
            <person name="Saunders D."/>
            <person name="Sodergren E.J."/>
            <person name="Davis P."/>
            <person name="Kerhornou A."/>
            <person name="Nie X."/>
            <person name="Hall N."/>
            <person name="Anjard C."/>
            <person name="Hemphill L."/>
            <person name="Bason N."/>
            <person name="Farbrother P."/>
            <person name="Desany B."/>
            <person name="Just E."/>
            <person name="Morio T."/>
            <person name="Rost R."/>
            <person name="Churcher C.M."/>
            <person name="Cooper J."/>
            <person name="Haydock S."/>
            <person name="van Driessche N."/>
            <person name="Cronin A."/>
            <person name="Goodhead I."/>
            <person name="Muzny D.M."/>
            <person name="Mourier T."/>
            <person name="Pain A."/>
            <person name="Lu M."/>
            <person name="Harper D."/>
            <person name="Lindsay R."/>
            <person name="Hauser H."/>
            <person name="James K.D."/>
            <person name="Quiles M."/>
            <person name="Madan Babu M."/>
            <person name="Saito T."/>
            <person name="Buchrieser C."/>
            <person name="Wardroper A."/>
            <person name="Felder M."/>
            <person name="Thangavelu M."/>
            <person name="Johnson D."/>
            <person name="Knights A."/>
            <person name="Loulseged H."/>
            <person name="Mungall K.L."/>
            <person name="Oliver K."/>
            <person name="Price C."/>
            <person name="Quail M.A."/>
            <person name="Urushihara H."/>
            <person name="Hernandez J."/>
            <person name="Rabbinowitsch E."/>
            <person name="Steffen D."/>
            <person name="Sanders M."/>
            <person name="Ma J."/>
            <person name="Kohara Y."/>
            <person name="Sharp S."/>
            <person name="Simmonds M.N."/>
            <person name="Spiegler S."/>
            <person name="Tivey A."/>
            <person name="Sugano S."/>
            <person name="White B."/>
            <person name="Walker D."/>
            <person name="Woodward J.R."/>
            <person name="Winckler T."/>
            <person name="Tanaka Y."/>
            <person name="Shaulsky G."/>
            <person name="Schleicher M."/>
            <person name="Weinstock G.M."/>
            <person name="Rosenthal A."/>
            <person name="Cox E.C."/>
            <person name="Chisholm R.L."/>
            <person name="Gibbs R.A."/>
            <person name="Loomis W.F."/>
            <person name="Platzer M."/>
            <person name="Kay R.R."/>
            <person name="Williams J.G."/>
            <person name="Dear P.H."/>
            <person name="Noegel A.A."/>
            <person name="Barrell B.G."/>
            <person name="Kuspa A."/>
        </authorList>
    </citation>
    <scope>NUCLEOTIDE SEQUENCE [LARGE SCALE GENOMIC DNA]</scope>
    <source>
        <strain>AX4</strain>
    </source>
</reference>
<feature type="signal peptide" evidence="2">
    <location>
        <begin position="1"/>
        <end position="19"/>
    </location>
</feature>
<feature type="chain" id="PRO_5000070596" description="Discoidin-inducing complex subunit B">
    <location>
        <begin position="20"/>
        <end position="607"/>
    </location>
</feature>
<feature type="topological domain" description="Extracellular" evidence="1">
    <location>
        <begin position="20"/>
        <end position="554"/>
    </location>
</feature>
<feature type="transmembrane region" description="Helical" evidence="1">
    <location>
        <begin position="555"/>
        <end position="575"/>
    </location>
</feature>
<feature type="topological domain" description="Cytoplasmic" evidence="1">
    <location>
        <begin position="576"/>
        <end position="607"/>
    </location>
</feature>
<feature type="glycosylation site" description="N-linked (GlcNAc...) asparagine" evidence="1">
    <location>
        <position position="75"/>
    </location>
</feature>
<feature type="glycosylation site" description="N-linked (GlcNAc...) asparagine" evidence="1">
    <location>
        <position position="161"/>
    </location>
</feature>
<feature type="glycosylation site" description="N-linked (GlcNAc...) asparagine" evidence="1">
    <location>
        <position position="215"/>
    </location>
</feature>
<feature type="glycosylation site" description="N-linked (GlcNAc...) asparagine" evidence="1">
    <location>
        <position position="276"/>
    </location>
</feature>
<feature type="glycosylation site" description="N-linked (GlcNAc...) asparagine" evidence="1">
    <location>
        <position position="277"/>
    </location>
</feature>
<feature type="glycosylation site" description="N-linked (GlcNAc...) asparagine" evidence="1">
    <location>
        <position position="307"/>
    </location>
</feature>
<feature type="glycosylation site" description="N-linked (GlcNAc...) asparagine" evidence="1">
    <location>
        <position position="324"/>
    </location>
</feature>
<feature type="glycosylation site" description="N-linked (GlcNAc...) asparagine" evidence="1">
    <location>
        <position position="453"/>
    </location>
</feature>
<feature type="glycosylation site" description="N-linked (GlcNAc...) asparagine" evidence="1">
    <location>
        <position position="477"/>
    </location>
</feature>
<feature type="glycosylation site" description="N-linked (GlcNAc...) asparagine" evidence="1">
    <location>
        <position position="527"/>
    </location>
</feature>
<feature type="sequence conflict" description="In Ref. 1; CAD69023." evidence="3" ref="1">
    <original>C</original>
    <variation>L</variation>
    <location>
        <position position="538"/>
    </location>
</feature>
<proteinExistence type="evidence at protein level"/>
<protein>
    <recommendedName>
        <fullName>Discoidin-inducing complex subunit B</fullName>
    </recommendedName>
</protein>
<name>DICB_DICDI</name>
<evidence type="ECO:0000255" key="1"/>
<evidence type="ECO:0000269" key="2">
    <source>
    </source>
</evidence>
<evidence type="ECO:0000305" key="3"/>
<accession>Q55GS3</accession>
<accession>Q7YZT1</accession>
<dbReference type="EMBL" id="AJ548836">
    <property type="protein sequence ID" value="CAD69023.1"/>
    <property type="molecule type" value="mRNA"/>
</dbReference>
<dbReference type="EMBL" id="AAFI02000003">
    <property type="protein sequence ID" value="EAL73188.1"/>
    <property type="molecule type" value="Genomic_DNA"/>
</dbReference>
<dbReference type="RefSeq" id="XP_647111.1">
    <property type="nucleotide sequence ID" value="XM_642019.1"/>
</dbReference>
<dbReference type="FunCoup" id="Q55GS3">
    <property type="interactions" value="272"/>
</dbReference>
<dbReference type="STRING" id="44689.Q55GS3"/>
<dbReference type="GlyCosmos" id="Q55GS3">
    <property type="glycosylation" value="10 sites, No reported glycans"/>
</dbReference>
<dbReference type="GlyGen" id="Q55GS3">
    <property type="glycosylation" value="10 sites"/>
</dbReference>
<dbReference type="PaxDb" id="44689-DDB0191200"/>
<dbReference type="EnsemblProtists" id="EAL73188">
    <property type="protein sequence ID" value="EAL73188"/>
    <property type="gene ID" value="DDB_G0267470"/>
</dbReference>
<dbReference type="GeneID" id="8615915"/>
<dbReference type="KEGG" id="ddi:DDB_G0267470"/>
<dbReference type="dictyBase" id="DDB_G0267470">
    <property type="gene designation" value="dicB"/>
</dbReference>
<dbReference type="VEuPathDB" id="AmoebaDB:DDB_G0267470"/>
<dbReference type="eggNOG" id="ENOG502RFIG">
    <property type="taxonomic scope" value="Eukaryota"/>
</dbReference>
<dbReference type="HOGENOM" id="CLU_450121_0_0_1"/>
<dbReference type="InParanoid" id="Q55GS3"/>
<dbReference type="OMA" id="THSIEIY"/>
<dbReference type="PhylomeDB" id="Q55GS3"/>
<dbReference type="PRO" id="PR:Q55GS3"/>
<dbReference type="Proteomes" id="UP000002195">
    <property type="component" value="Chromosome 1"/>
</dbReference>
<dbReference type="GO" id="GO:0005576">
    <property type="term" value="C:extracellular region"/>
    <property type="evidence" value="ECO:0000314"/>
    <property type="project" value="dictyBase"/>
</dbReference>
<dbReference type="GO" id="GO:0016020">
    <property type="term" value="C:membrane"/>
    <property type="evidence" value="ECO:0007669"/>
    <property type="project" value="UniProtKB-SubCell"/>
</dbReference>
<dbReference type="GO" id="GO:0030587">
    <property type="term" value="P:sorocarp development"/>
    <property type="evidence" value="ECO:0007001"/>
    <property type="project" value="dictyBase"/>
</dbReference>
<dbReference type="InterPro" id="IPR053370">
    <property type="entry name" value="QS_Complex_Regulator"/>
</dbReference>
<dbReference type="PANTHER" id="PTHR35035">
    <property type="entry name" value="DISCOIDIN-INDUCING COMPLEX SUBUNIT B"/>
    <property type="match status" value="1"/>
</dbReference>
<dbReference type="PANTHER" id="PTHR35035:SF3">
    <property type="entry name" value="DISCOIDIN-INDUCING COMPLEX SUBUNIT B"/>
    <property type="match status" value="1"/>
</dbReference>
<gene>
    <name type="primary">dicB</name>
    <name type="ORF">DDB_G0267470</name>
</gene>
<comment type="function">
    <text>Component of a complex that acts as a quorum sensing protein regulating discoidin gene expression during growth and development. Its function in the complex is unclear as it has no ability to induce discoidin during growth and development by itself.</text>
</comment>
<comment type="subunit">
    <text>Forms a complex with psiF/dicA.</text>
</comment>
<comment type="subcellular location">
    <subcellularLocation>
        <location evidence="3">Membrane</location>
        <topology evidence="3">Single-pass type I membrane protein</topology>
    </subcellularLocation>
    <subcellularLocation>
        <location evidence="2">Secreted</location>
    </subcellularLocation>
</comment>
<comment type="miscellaneous">
    <text>According to PubMed:15947191, it is secreted in the conditioned medium. However, prediction tools clearly predict a transmembrane domain. In some conditions, it may be cleaved and secreted in the conditioned medium, which would explain the discrepancy.</text>
</comment>
<organism>
    <name type="scientific">Dictyostelium discoideum</name>
    <name type="common">Social amoeba</name>
    <dbReference type="NCBI Taxonomy" id="44689"/>
    <lineage>
        <taxon>Eukaryota</taxon>
        <taxon>Amoebozoa</taxon>
        <taxon>Evosea</taxon>
        <taxon>Eumycetozoa</taxon>
        <taxon>Dictyostelia</taxon>
        <taxon>Dictyosteliales</taxon>
        <taxon>Dictyosteliaceae</taxon>
        <taxon>Dictyostelium</taxon>
    </lineage>
</organism>
<sequence>MNKKIIILIYLIFIKSIVGQNPVWIGGSGCNLFTDSSCWSPSTSPLTTDIVTMGVDSTQTVVDGDITITTLINNNLTLGGVEMSSTISLEIIDTSLIVSGAFSMATNSRLSLSLSDSYANSLVSGSATRNAVNVLMNLQSMQTLMVGSSFTMTGNSVLDVNRSISTINGVFTMNDDTSLFMYSKQNGDSKFTVGNSVLNDASSLNFQGQSFIFFNQTNLPSGLVLNDQSKIVAIDADNVKISGVVTLNDQSSIQLTSSRLYLDSLVTATTSSILVNNSTLSILQSIPTTFSPASAVFKGSVFTIKSNCTIQSPITMIDSVYSFNQSHTLASQFTGSNVYMIMDAAILNAGNYYDCSGCSLSMRNSIANFDSYENQGDLILSSSKLNSNAPITSNTGSIFGYYGELNQALTVESGSLGVYNEKTRLFVNGNVIVESGAKIQFYLSSPLDFSWLNTSGSLDVQSGTIIEIYVYIEILNNGSMEVIKTSNGFVTPLSTDNVKLYTYDPDNDVITDFSTTGGCEYSISITNTSVLVHTDYACQQAIITLGTDGISKGSLAGISVSMVALACFVSLGVWWKTSKKNDQRNDSQVLTNFSQNKSDDIDVERKL</sequence>